<sequence length="160" mass="18620">MVPKLFTSQICLLLLLGLMGVEGSLHARPPQFTKAQWFAIQHINVNPPRCTIAMRVINNYQRRCKNQNTFLRTTFAYTANVCRNERIRCPRNRTLHNCHRSRYRVPLLHCDLINPGAQNISTCRYADRPGRRFYVVACESRDPRDSPRYPVVPVHLDTTI</sequence>
<gene>
    <name type="primary">RNASE3</name>
    <name type="synonym">RNS3</name>
</gene>
<dbReference type="EC" id="3.1.27.-"/>
<dbReference type="EMBL" id="U24098">
    <property type="protein sequence ID" value="AAC50146.1"/>
    <property type="molecule type" value="Genomic_DNA"/>
</dbReference>
<dbReference type="PIR" id="I61895">
    <property type="entry name" value="I61895"/>
</dbReference>
<dbReference type="PDB" id="7TY1">
    <property type="method" value="X-ray"/>
    <property type="resolution" value="1.80 A"/>
    <property type="chains" value="A=28-160"/>
</dbReference>
<dbReference type="PDBsum" id="7TY1"/>
<dbReference type="BMRB" id="P47779"/>
<dbReference type="SMR" id="P47779"/>
<dbReference type="STRING" id="9541.ENSMFAP00000011224"/>
<dbReference type="GlyCosmos" id="P47779">
    <property type="glycosylation" value="2 sites, No reported glycans"/>
</dbReference>
<dbReference type="eggNOG" id="ENOG502TF52">
    <property type="taxonomic scope" value="Eukaryota"/>
</dbReference>
<dbReference type="Proteomes" id="UP000233100">
    <property type="component" value="Unplaced"/>
</dbReference>
<dbReference type="GO" id="GO:0005615">
    <property type="term" value="C:extracellular space"/>
    <property type="evidence" value="ECO:0007669"/>
    <property type="project" value="TreeGrafter"/>
</dbReference>
<dbReference type="GO" id="GO:0004519">
    <property type="term" value="F:endonuclease activity"/>
    <property type="evidence" value="ECO:0007669"/>
    <property type="project" value="UniProtKB-KW"/>
</dbReference>
<dbReference type="GO" id="GO:0003676">
    <property type="term" value="F:nucleic acid binding"/>
    <property type="evidence" value="ECO:0007669"/>
    <property type="project" value="InterPro"/>
</dbReference>
<dbReference type="GO" id="GO:0004540">
    <property type="term" value="F:RNA nuclease activity"/>
    <property type="evidence" value="ECO:0007669"/>
    <property type="project" value="TreeGrafter"/>
</dbReference>
<dbReference type="GO" id="GO:0006935">
    <property type="term" value="P:chemotaxis"/>
    <property type="evidence" value="ECO:0007669"/>
    <property type="project" value="TreeGrafter"/>
</dbReference>
<dbReference type="GO" id="GO:0050830">
    <property type="term" value="P:defense response to Gram-positive bacterium"/>
    <property type="evidence" value="ECO:0007669"/>
    <property type="project" value="TreeGrafter"/>
</dbReference>
<dbReference type="GO" id="GO:0002227">
    <property type="term" value="P:innate immune response in mucosa"/>
    <property type="evidence" value="ECO:0007669"/>
    <property type="project" value="TreeGrafter"/>
</dbReference>
<dbReference type="CDD" id="cd06265">
    <property type="entry name" value="RNase_A_canonical"/>
    <property type="match status" value="1"/>
</dbReference>
<dbReference type="Gene3D" id="3.10.130.10">
    <property type="entry name" value="Ribonuclease A-like domain"/>
    <property type="match status" value="1"/>
</dbReference>
<dbReference type="InterPro" id="IPR001427">
    <property type="entry name" value="RNaseA"/>
</dbReference>
<dbReference type="InterPro" id="IPR036816">
    <property type="entry name" value="RNaseA-like_dom_sf"/>
</dbReference>
<dbReference type="InterPro" id="IPR023411">
    <property type="entry name" value="RNaseA_AS"/>
</dbReference>
<dbReference type="InterPro" id="IPR023412">
    <property type="entry name" value="RNaseA_domain"/>
</dbReference>
<dbReference type="PANTHER" id="PTHR11437:SF3">
    <property type="entry name" value="EOSINOPHIL CATIONIC PROTEIN"/>
    <property type="match status" value="1"/>
</dbReference>
<dbReference type="PANTHER" id="PTHR11437">
    <property type="entry name" value="RIBONUCLEASE"/>
    <property type="match status" value="1"/>
</dbReference>
<dbReference type="Pfam" id="PF00074">
    <property type="entry name" value="RnaseA"/>
    <property type="match status" value="1"/>
</dbReference>
<dbReference type="PRINTS" id="PR00794">
    <property type="entry name" value="RIBONUCLEASE"/>
</dbReference>
<dbReference type="SMART" id="SM00092">
    <property type="entry name" value="RNAse_Pc"/>
    <property type="match status" value="1"/>
</dbReference>
<dbReference type="SUPFAM" id="SSF54076">
    <property type="entry name" value="RNase A-like"/>
    <property type="match status" value="1"/>
</dbReference>
<dbReference type="PROSITE" id="PS00127">
    <property type="entry name" value="RNASE_PANCREATIC"/>
    <property type="match status" value="1"/>
</dbReference>
<proteinExistence type="evidence at protein level"/>
<organism>
    <name type="scientific">Macaca fascicularis</name>
    <name type="common">Crab-eating macaque</name>
    <name type="synonym">Cynomolgus monkey</name>
    <dbReference type="NCBI Taxonomy" id="9541"/>
    <lineage>
        <taxon>Eukaryota</taxon>
        <taxon>Metazoa</taxon>
        <taxon>Chordata</taxon>
        <taxon>Craniata</taxon>
        <taxon>Vertebrata</taxon>
        <taxon>Euteleostomi</taxon>
        <taxon>Mammalia</taxon>
        <taxon>Eutheria</taxon>
        <taxon>Euarchontoglires</taxon>
        <taxon>Primates</taxon>
        <taxon>Haplorrhini</taxon>
        <taxon>Catarrhini</taxon>
        <taxon>Cercopithecidae</taxon>
        <taxon>Cercopithecinae</taxon>
        <taxon>Macaca</taxon>
    </lineage>
</organism>
<keyword id="KW-0002">3D-structure</keyword>
<keyword id="KW-1015">Disulfide bond</keyword>
<keyword id="KW-0255">Endonuclease</keyword>
<keyword id="KW-0325">Glycoprotein</keyword>
<keyword id="KW-0378">Hydrolase</keyword>
<keyword id="KW-0944">Nitration</keyword>
<keyword id="KW-0540">Nuclease</keyword>
<keyword id="KW-1185">Reference proteome</keyword>
<keyword id="KW-0964">Secreted</keyword>
<keyword id="KW-0732">Signal</keyword>
<reference key="1">
    <citation type="journal article" date="1995" name="Nat. Genet.">
        <title>Rapid evolution of a unique family of primate ribonuclease genes.</title>
        <authorList>
            <person name="Rosenberg H.F."/>
            <person name="Dyer K.D."/>
            <person name="Tiffany H.L."/>
            <person name="Gonzalez M."/>
        </authorList>
    </citation>
    <scope>NUCLEOTIDE SEQUENCE [GENOMIC DNA]</scope>
</reference>
<feature type="signal peptide" evidence="1">
    <location>
        <begin position="1"/>
        <end position="27"/>
    </location>
</feature>
<feature type="chain" id="PRO_0000030863" description="Eosinophil cationic protein">
    <location>
        <begin position="28"/>
        <end position="160"/>
    </location>
</feature>
<feature type="region of interest" description="Required for nearly all of the bactericidal activities; partially involved in LPS-binding" evidence="1">
    <location>
        <begin position="28"/>
        <end position="72"/>
    </location>
</feature>
<feature type="active site" description="Proton acceptor" evidence="1">
    <location>
        <position position="42"/>
    </location>
</feature>
<feature type="active site" description="Proton donor" evidence="1">
    <location>
        <position position="155"/>
    </location>
</feature>
<feature type="binding site" evidence="1">
    <location>
        <begin position="65"/>
        <end position="69"/>
    </location>
    <ligand>
        <name>substrate</name>
    </ligand>
</feature>
<feature type="modified residue" description="3'-nitrotyrosine" evidence="2">
    <location>
        <position position="60"/>
    </location>
</feature>
<feature type="glycosylation site" description="N-linked (GlcNAc...) asparagine" evidence="3">
    <location>
        <position position="92"/>
    </location>
</feature>
<feature type="glycosylation site" description="N-linked (GlcNAc...) asparagine" evidence="3">
    <location>
        <position position="119"/>
    </location>
</feature>
<feature type="disulfide bond" evidence="1">
    <location>
        <begin position="50"/>
        <end position="110"/>
    </location>
</feature>
<feature type="disulfide bond" evidence="1">
    <location>
        <begin position="64"/>
        <end position="123"/>
    </location>
</feature>
<feature type="disulfide bond" evidence="1">
    <location>
        <begin position="82"/>
        <end position="138"/>
    </location>
</feature>
<feature type="disulfide bond" evidence="1">
    <location>
        <begin position="89"/>
        <end position="98"/>
    </location>
</feature>
<feature type="helix" evidence="5">
    <location>
        <begin position="34"/>
        <end position="42"/>
    </location>
</feature>
<feature type="helix" evidence="5">
    <location>
        <begin position="50"/>
        <end position="61"/>
    </location>
</feature>
<feature type="strand" evidence="5">
    <location>
        <begin position="66"/>
        <end position="73"/>
    </location>
</feature>
<feature type="helix" evidence="5">
    <location>
        <begin position="75"/>
        <end position="81"/>
    </location>
</feature>
<feature type="strand" evidence="5">
    <location>
        <begin position="90"/>
        <end position="92"/>
    </location>
</feature>
<feature type="strand" evidence="5">
    <location>
        <begin position="98"/>
        <end position="100"/>
    </location>
</feature>
<feature type="strand" evidence="5">
    <location>
        <begin position="105"/>
        <end position="113"/>
    </location>
</feature>
<feature type="helix" evidence="5">
    <location>
        <begin position="120"/>
        <end position="122"/>
    </location>
</feature>
<feature type="strand" evidence="5">
    <location>
        <begin position="125"/>
        <end position="140"/>
    </location>
</feature>
<feature type="strand" evidence="5">
    <location>
        <begin position="150"/>
        <end position="160"/>
    </location>
</feature>
<name>ECP_MACFA</name>
<accession>P47779</accession>
<evidence type="ECO:0000250" key="1"/>
<evidence type="ECO:0000250" key="2">
    <source>
        <dbReference type="UniProtKB" id="P12724"/>
    </source>
</evidence>
<evidence type="ECO:0000255" key="3"/>
<evidence type="ECO:0000305" key="4"/>
<evidence type="ECO:0007829" key="5">
    <source>
        <dbReference type="PDB" id="7TY1"/>
    </source>
</evidence>
<comment type="function">
    <text evidence="1">Cytotoxin and helminthotoxin with low-efficiency ribonuclease activity. Possesses a wide variety of biological activities. Exhibits antibacterial activity (By similarity).</text>
</comment>
<comment type="subunit">
    <text evidence="1">Interacts with bacterial lipopolysaccharide (LPS) and lipoteichoic acid (LTA). In vitro interacts with phospholipid bilayers.</text>
</comment>
<comment type="subcellular location">
    <subcellularLocation>
        <location evidence="1">Secreted</location>
    </subcellularLocation>
    <text evidence="1">Located in the matrix of eosinophil large specific granule, which are released following activation by an immune stimulus.</text>
</comment>
<comment type="similarity">
    <text evidence="4">Belongs to the pancreatic ribonuclease family.</text>
</comment>
<protein>
    <recommendedName>
        <fullName>Eosinophil cationic protein</fullName>
        <shortName>ECP</shortName>
        <ecNumber>3.1.27.-</ecNumber>
    </recommendedName>
    <alternativeName>
        <fullName>Ribonuclease 3</fullName>
        <shortName>RNase 3</shortName>
    </alternativeName>
</protein>